<dbReference type="EMBL" id="AB177986">
    <property type="protein sequence ID" value="BAD67433.1"/>
    <property type="molecule type" value="mRNA"/>
</dbReference>
<dbReference type="RefSeq" id="NP_001007818.1">
    <property type="nucleotide sequence ID" value="NM_001007817.1"/>
</dbReference>
<dbReference type="BMRB" id="Q5W9D7"/>
<dbReference type="SMR" id="Q5W9D7"/>
<dbReference type="FunCoup" id="Q5W9D7">
    <property type="interactions" value="2543"/>
</dbReference>
<dbReference type="STRING" id="9913.ENSBTAP00000048511"/>
<dbReference type="PaxDb" id="9913-ENSBTAP00000048511"/>
<dbReference type="Ensembl" id="ENSBTAT00000054202.4">
    <property type="protein sequence ID" value="ENSBTAP00000048511.3"/>
    <property type="gene ID" value="ENSBTAG00000011593.7"/>
</dbReference>
<dbReference type="GeneID" id="493722"/>
<dbReference type="KEGG" id="bta:493722"/>
<dbReference type="CTD" id="9444"/>
<dbReference type="VEuPathDB" id="HostDB:ENSBTAG00000011593"/>
<dbReference type="VGNC" id="VGNC:33597">
    <property type="gene designation" value="QKI"/>
</dbReference>
<dbReference type="eggNOG" id="KOG1588">
    <property type="taxonomic scope" value="Eukaryota"/>
</dbReference>
<dbReference type="GeneTree" id="ENSGT00940000155310"/>
<dbReference type="InParanoid" id="Q5W9D7"/>
<dbReference type="OMA" id="WICAEIS"/>
<dbReference type="OrthoDB" id="6777263at2759"/>
<dbReference type="Proteomes" id="UP000009136">
    <property type="component" value="Chromosome 9"/>
</dbReference>
<dbReference type="Bgee" id="ENSBTAG00000011593">
    <property type="expression patterns" value="Expressed in hypothalamus and 109 other cell types or tissues"/>
</dbReference>
<dbReference type="GO" id="GO:0005737">
    <property type="term" value="C:cytoplasm"/>
    <property type="evidence" value="ECO:0007669"/>
    <property type="project" value="UniProtKB-SubCell"/>
</dbReference>
<dbReference type="GO" id="GO:0005634">
    <property type="term" value="C:nucleus"/>
    <property type="evidence" value="ECO:0000318"/>
    <property type="project" value="GO_Central"/>
</dbReference>
<dbReference type="GO" id="GO:0003677">
    <property type="term" value="F:DNA binding"/>
    <property type="evidence" value="ECO:0007669"/>
    <property type="project" value="UniProtKB-KW"/>
</dbReference>
<dbReference type="GO" id="GO:0035198">
    <property type="term" value="F:miRNA binding"/>
    <property type="evidence" value="ECO:0000250"/>
    <property type="project" value="UniProtKB"/>
</dbReference>
<dbReference type="GO" id="GO:0003729">
    <property type="term" value="F:mRNA binding"/>
    <property type="evidence" value="ECO:0000318"/>
    <property type="project" value="GO_Central"/>
</dbReference>
<dbReference type="GO" id="GO:0017124">
    <property type="term" value="F:SH3 domain binding"/>
    <property type="evidence" value="ECO:0007669"/>
    <property type="project" value="UniProtKB-KW"/>
</dbReference>
<dbReference type="GO" id="GO:0014004">
    <property type="term" value="P:microglia differentiation"/>
    <property type="evidence" value="ECO:0000250"/>
    <property type="project" value="UniProtKB"/>
</dbReference>
<dbReference type="GO" id="GO:0051028">
    <property type="term" value="P:mRNA transport"/>
    <property type="evidence" value="ECO:0007669"/>
    <property type="project" value="UniProtKB-KW"/>
</dbReference>
<dbReference type="GO" id="GO:1905869">
    <property type="term" value="P:negative regulation of 3'-UTR-mediated mRNA stabilization"/>
    <property type="evidence" value="ECO:0000250"/>
    <property type="project" value="UniProtKB"/>
</dbReference>
<dbReference type="GO" id="GO:0120163">
    <property type="term" value="P:negative regulation of cold-induced thermogenesis"/>
    <property type="evidence" value="ECO:0000250"/>
    <property type="project" value="UniProtKB"/>
</dbReference>
<dbReference type="GO" id="GO:0045650">
    <property type="term" value="P:negative regulation of macrophage differentiation"/>
    <property type="evidence" value="ECO:0000250"/>
    <property type="project" value="UniProtKB"/>
</dbReference>
<dbReference type="GO" id="GO:2000626">
    <property type="term" value="P:negative regulation of miRNA catabolic process"/>
    <property type="evidence" value="ECO:0000250"/>
    <property type="project" value="UniProtKB"/>
</dbReference>
<dbReference type="GO" id="GO:0017148">
    <property type="term" value="P:negative regulation of translation"/>
    <property type="evidence" value="ECO:0000250"/>
    <property type="project" value="UniProtKB"/>
</dbReference>
<dbReference type="GO" id="GO:0048710">
    <property type="term" value="P:regulation of astrocyte differentiation"/>
    <property type="evidence" value="ECO:0000250"/>
    <property type="project" value="UniProtKB"/>
</dbReference>
<dbReference type="GO" id="GO:0010717">
    <property type="term" value="P:regulation of epithelial to mesenchymal transition"/>
    <property type="evidence" value="ECO:0000250"/>
    <property type="project" value="UniProtKB"/>
</dbReference>
<dbReference type="GO" id="GO:0048024">
    <property type="term" value="P:regulation of mRNA splicing, via spliceosome"/>
    <property type="evidence" value="ECO:0000250"/>
    <property type="project" value="UniProtKB"/>
</dbReference>
<dbReference type="GO" id="GO:0160091">
    <property type="term" value="P:spliceosome-depend formation of circular RNA"/>
    <property type="evidence" value="ECO:0000250"/>
    <property type="project" value="UniProtKB"/>
</dbReference>
<dbReference type="GO" id="GO:0035886">
    <property type="term" value="P:vascular associated smooth muscle cell differentiation"/>
    <property type="evidence" value="ECO:0000250"/>
    <property type="project" value="UniProtKB"/>
</dbReference>
<dbReference type="CDD" id="cd22465">
    <property type="entry name" value="KH-I_Hqk"/>
    <property type="match status" value="1"/>
</dbReference>
<dbReference type="FunFam" id="1.20.5.4010:FF:000001">
    <property type="entry name" value="protein quaking isoform X1"/>
    <property type="match status" value="1"/>
</dbReference>
<dbReference type="FunFam" id="3.30.1370.10:FF:000055">
    <property type="entry name" value="protein quaking isoform X1"/>
    <property type="match status" value="1"/>
</dbReference>
<dbReference type="Gene3D" id="1.20.5.4010">
    <property type="match status" value="1"/>
</dbReference>
<dbReference type="Gene3D" id="3.30.1370.10">
    <property type="entry name" value="K Homology domain, type 1"/>
    <property type="match status" value="1"/>
</dbReference>
<dbReference type="InterPro" id="IPR045071">
    <property type="entry name" value="BBP-like"/>
</dbReference>
<dbReference type="InterPro" id="IPR055256">
    <property type="entry name" value="KH_1_KHDC4/BBP-like"/>
</dbReference>
<dbReference type="InterPro" id="IPR004087">
    <property type="entry name" value="KH_dom"/>
</dbReference>
<dbReference type="InterPro" id="IPR036612">
    <property type="entry name" value="KH_dom_type_1_sf"/>
</dbReference>
<dbReference type="InterPro" id="IPR032367">
    <property type="entry name" value="Quaking_NLS"/>
</dbReference>
<dbReference type="InterPro" id="IPR032377">
    <property type="entry name" value="STAR_dimer"/>
</dbReference>
<dbReference type="PANTHER" id="PTHR11208:SF125">
    <property type="entry name" value="KH DOMAIN-CONTAINING RNA-BINDING PROTEIN QKI"/>
    <property type="match status" value="1"/>
</dbReference>
<dbReference type="PANTHER" id="PTHR11208">
    <property type="entry name" value="RNA-BINDING PROTEIN RELATED"/>
    <property type="match status" value="1"/>
</dbReference>
<dbReference type="Pfam" id="PF22675">
    <property type="entry name" value="KH-I_KHDC4-BBP"/>
    <property type="match status" value="1"/>
</dbReference>
<dbReference type="Pfam" id="PF16551">
    <property type="entry name" value="Quaking_NLS"/>
    <property type="match status" value="1"/>
</dbReference>
<dbReference type="Pfam" id="PF16544">
    <property type="entry name" value="STAR_dimer"/>
    <property type="match status" value="1"/>
</dbReference>
<dbReference type="SMART" id="SM00322">
    <property type="entry name" value="KH"/>
    <property type="match status" value="1"/>
</dbReference>
<dbReference type="SUPFAM" id="SSF54791">
    <property type="entry name" value="Eukaryotic type KH-domain (KH-domain type I)"/>
    <property type="match status" value="1"/>
</dbReference>
<sequence length="341" mass="37671">MVGEMETKEKPKPTPDYLMQLMNDKKLMSSLPNFCGIFNHLERLLDEEISRVRKDMYNDTLNGSTEKRSAELPDAVGPIVQLQEKLYVPVKEYPDFNFVGRILGPRGLTAKQLEAETGCKIMVRGKGSMRDKKKEEQNRGKPNWEHLNEDLHVLITVEDAQNRAEIKLKRAVEEVKKLLVPAAEGEDSLKKMQLMELAILNGTYRDANIKSPALAFSLAATAQAAPRIITGPAPVLPPAALRTPTPAGPTIMPLIRQIQTAVMPNGTPHPTAAIVPPGPEAGLIYTPYEYPYTLAPATSILEYPIEPSGVLGAVATKVRRHDMRVHPYQRIVTADRAATGN</sequence>
<comment type="function">
    <text evidence="2 3">RNA reader protein, which recognizes and binds specific RNAs, thereby regulating RNA metabolic processes, such as pre-mRNA splicing, circular RNA (circRNA) formation, mRNA export, mRNA stability and/or translation. Involved in various cellular processes, such as mRNA storage into stress granules, apoptosis, lipid deposition, interferon response, glial cell fate and development. Binds to the 5'-NACUAAY-N(1,20)-UAAY-3' RNA core sequence. Acts as a mRNA modification reader that specifically recognizes and binds mRNA transcripts modified by internal N(7)-methylguanine (m7G). Promotes the formation of circular RNAs (circRNAs) during the epithelial to mesenchymal transition and in cardiomyocytes: acts by binding to sites flanking circRNA-forming exons. CircRNAs are produced by back-splicing circularization of pre-mRNAs. Plays a central role in myelinization via 3 distinct mechanisms (By similarity). First, acts by protecting and promoting stability of target mRNAs such as MBP, SIRT2 and CDKN1B, which promotes oligodendrocyte differentiation. Second, participates in mRNA transport by regulating the nuclear export of MBP mRNA. Finally, indirectly regulates mRNA splicing of MAG pre-mRNA during oligodendrocyte differentiation by acting as a negative regulator of MAG exon 12 alternative splicing: acts by binding to HNRNPA1 mRNA splicing factor, preventing its translation. Involved in microglia differentiation and remyelination by regulating microexon alternative splicing of the Rho GTPase pathway (By similarity). Involved in macrophage differentiation: promotes monocyte differentiation by regulating pre-mRNA splicing in naive peripheral blood monocytes (By similarity). Acts as an important regulator of muscle development: required for the contractile function of cardiomyocytes by regulating alternative splicing of cardiomyocyte transcripts. Acts as a negative regulator of thermogenesis by decreasing stability, nuclear export and translation of mRNAs encoding PPARGC1A and UCP1. Also required for visceral endoderm function and blood vessel development (By similarity). May also play a role in smooth muscle development (By similarity). In addition to its RNA-binding activity, also acts as a nuclear transcription coactivator for SREBF2/SREBP2 (By similarity).</text>
</comment>
<comment type="subunit">
    <text evidence="2 3">Homodimer; does not require RNA to homodimerize (By similarity). Able to heterodimerize with BICC1 (By similarity).</text>
</comment>
<comment type="subcellular location">
    <subcellularLocation>
        <location evidence="2">Nucleus</location>
    </subcellularLocation>
    <subcellularLocation>
        <location evidence="2">Cytoplasm</location>
    </subcellularLocation>
</comment>
<comment type="domain">
    <text evidence="2">The KH domain and the Qua2 region are involved in RNA binding.</text>
</comment>
<comment type="PTM">
    <text evidence="3">Methylated by PRMT1.</text>
</comment>
<comment type="PTM">
    <text evidence="3">Tyrosine phosphorylated at its C-terminus, probably by FYN. Phosphorylation leads to decreased mRNA-binding affinity, affecting transport and/or stabilization of MBP mRNA (By similarity).</text>
</comment>
<comment type="PTM">
    <text evidence="3">Ubiquitinated by RNF6 in macrophages, leading to its degradation.</text>
</comment>
<comment type="similarity">
    <text evidence="4">Belongs to the quaking family.</text>
</comment>
<proteinExistence type="evidence at transcript level"/>
<name>QKI_BOVIN</name>
<protein>
    <recommendedName>
        <fullName evidence="3">KH domain-containing RNA-binding protein QKI</fullName>
    </recommendedName>
    <alternativeName>
        <fullName evidence="3">Protein quaking</fullName>
        <shortName evidence="4">BqkI</shortName>
    </alternativeName>
</protein>
<evidence type="ECO:0000250" key="1">
    <source>
        <dbReference type="UniProtKB" id="Q17339"/>
    </source>
</evidence>
<evidence type="ECO:0000250" key="2">
    <source>
        <dbReference type="UniProtKB" id="Q96PU8"/>
    </source>
</evidence>
<evidence type="ECO:0000250" key="3">
    <source>
        <dbReference type="UniProtKB" id="Q9QYS9"/>
    </source>
</evidence>
<evidence type="ECO:0000305" key="4"/>
<reference key="1">
    <citation type="journal article" date="2005" name="DNA Seq.">
        <title>Nucleotide sequence of complementary DNA encoding for quaking protein of cow, horse and pig.</title>
        <authorList>
            <person name="Murata T."/>
            <person name="Yamashiro Y."/>
            <person name="Kondo T."/>
            <person name="Nakaichi M."/>
            <person name="Une S."/>
            <person name="Taura Y."/>
        </authorList>
    </citation>
    <scope>NUCLEOTIDE SEQUENCE [MRNA]</scope>
</reference>
<organism>
    <name type="scientific">Bos taurus</name>
    <name type="common">Bovine</name>
    <dbReference type="NCBI Taxonomy" id="9913"/>
    <lineage>
        <taxon>Eukaryota</taxon>
        <taxon>Metazoa</taxon>
        <taxon>Chordata</taxon>
        <taxon>Craniata</taxon>
        <taxon>Vertebrata</taxon>
        <taxon>Euteleostomi</taxon>
        <taxon>Mammalia</taxon>
        <taxon>Eutheria</taxon>
        <taxon>Laurasiatheria</taxon>
        <taxon>Artiodactyla</taxon>
        <taxon>Ruminantia</taxon>
        <taxon>Pecora</taxon>
        <taxon>Bovidae</taxon>
        <taxon>Bovinae</taxon>
        <taxon>Bos</taxon>
    </lineage>
</organism>
<gene>
    <name evidence="3" type="primary">QKI</name>
</gene>
<accession>Q5W9D7</accession>
<keyword id="KW-0963">Cytoplasm</keyword>
<keyword id="KW-0217">Developmental protein</keyword>
<keyword id="KW-0221">Differentiation</keyword>
<keyword id="KW-0238">DNA-binding</keyword>
<keyword id="KW-0488">Methylation</keyword>
<keyword id="KW-0507">mRNA processing</keyword>
<keyword id="KW-0508">mRNA splicing</keyword>
<keyword id="KW-0509">mRNA transport</keyword>
<keyword id="KW-0539">Nucleus</keyword>
<keyword id="KW-0597">Phosphoprotein</keyword>
<keyword id="KW-1185">Reference proteome</keyword>
<keyword id="KW-0694">RNA-binding</keyword>
<keyword id="KW-0729">SH3-binding</keyword>
<keyword id="KW-0810">Translation regulation</keyword>
<keyword id="KW-0813">Transport</keyword>
<keyword id="KW-0832">Ubl conjugation</keyword>
<feature type="chain" id="PRO_0000239369" description="KH domain-containing RNA-binding protein QKI">
    <location>
        <begin position="1"/>
        <end position="341"/>
    </location>
</feature>
<feature type="domain" description="KH">
    <location>
        <begin position="87"/>
        <end position="153"/>
    </location>
</feature>
<feature type="region of interest" description="Qua1 domain; involved in homodimerization" evidence="1">
    <location>
        <begin position="11"/>
        <end position="82"/>
    </location>
</feature>
<feature type="region of interest" description="Qua2 domain; involved in RNA binding" evidence="2">
    <location>
        <begin position="182"/>
        <end position="213"/>
    </location>
</feature>
<feature type="short sequence motif" description="SH3-binding">
    <location>
        <begin position="276"/>
        <end position="279"/>
    </location>
</feature>
<feature type="short sequence motif" description="Nuclear localization signal" evidence="3">
    <location>
        <begin position="324"/>
        <end position="330"/>
    </location>
</feature>
<feature type="site" description="Involved in RNA binding" evidence="2">
    <location>
        <position position="97"/>
    </location>
</feature>
<feature type="site" description="Involved in RNA binding" evidence="2">
    <location>
        <position position="120"/>
    </location>
</feature>
<feature type="site" description="Involved in RNA binding" evidence="2">
    <location>
        <position position="124"/>
    </location>
</feature>
<feature type="site" description="Involved in RNA binding" evidence="2">
    <location>
        <position position="130"/>
    </location>
</feature>
<feature type="site" description="Involved in RNA binding" evidence="2">
    <location>
        <position position="190"/>
    </location>
</feature>
<feature type="site" description="Involved in RNA binding" evidence="2">
    <location>
        <position position="193"/>
    </location>
</feature>
<feature type="modified residue" description="Phosphoserine" evidence="2">
    <location>
        <position position="188"/>
    </location>
</feature>
<feature type="modified residue" description="Omega-N-methylarginine" evidence="2">
    <location>
        <position position="227"/>
    </location>
</feature>
<feature type="modified residue" description="Asymmetric dimethylarginine; by CARM1; alternate" evidence="2">
    <location>
        <position position="242"/>
    </location>
</feature>
<feature type="modified residue" description="Omega-N-methylarginine; alternate" evidence="2">
    <location>
        <position position="242"/>
    </location>
</feature>
<feature type="modified residue" description="Omega-N-methylarginine" evidence="3">
    <location>
        <position position="256"/>
    </location>
</feature>